<dbReference type="EC" id="6.1.1.9" evidence="1"/>
<dbReference type="EMBL" id="BA000026">
    <property type="protein sequence ID" value="BAC43832.1"/>
    <property type="status" value="ALT_INIT"/>
    <property type="molecule type" value="Genomic_DNA"/>
</dbReference>
<dbReference type="RefSeq" id="WP_044891178.1">
    <property type="nucleotide sequence ID" value="NC_004432.1"/>
</dbReference>
<dbReference type="SMR" id="Q8EX08"/>
<dbReference type="FunCoup" id="Q8EX08">
    <property type="interactions" value="255"/>
</dbReference>
<dbReference type="STRING" id="272633.gene:10731133"/>
<dbReference type="KEGG" id="mpe:MYPE420"/>
<dbReference type="eggNOG" id="COG0525">
    <property type="taxonomic scope" value="Bacteria"/>
</dbReference>
<dbReference type="HOGENOM" id="CLU_001493_0_2_14"/>
<dbReference type="InParanoid" id="Q8EX08"/>
<dbReference type="Proteomes" id="UP000002522">
    <property type="component" value="Chromosome"/>
</dbReference>
<dbReference type="GO" id="GO:0005829">
    <property type="term" value="C:cytosol"/>
    <property type="evidence" value="ECO:0007669"/>
    <property type="project" value="TreeGrafter"/>
</dbReference>
<dbReference type="GO" id="GO:0002161">
    <property type="term" value="F:aminoacyl-tRNA deacylase activity"/>
    <property type="evidence" value="ECO:0007669"/>
    <property type="project" value="InterPro"/>
</dbReference>
<dbReference type="GO" id="GO:0005524">
    <property type="term" value="F:ATP binding"/>
    <property type="evidence" value="ECO:0007669"/>
    <property type="project" value="UniProtKB-UniRule"/>
</dbReference>
<dbReference type="GO" id="GO:0004832">
    <property type="term" value="F:valine-tRNA ligase activity"/>
    <property type="evidence" value="ECO:0007669"/>
    <property type="project" value="UniProtKB-UniRule"/>
</dbReference>
<dbReference type="GO" id="GO:0006438">
    <property type="term" value="P:valyl-tRNA aminoacylation"/>
    <property type="evidence" value="ECO:0007669"/>
    <property type="project" value="UniProtKB-UniRule"/>
</dbReference>
<dbReference type="CDD" id="cd07962">
    <property type="entry name" value="Anticodon_Ia_Val"/>
    <property type="match status" value="1"/>
</dbReference>
<dbReference type="Gene3D" id="3.40.50.620">
    <property type="entry name" value="HUPs"/>
    <property type="match status" value="3"/>
</dbReference>
<dbReference type="Gene3D" id="1.10.730.10">
    <property type="entry name" value="Isoleucyl-tRNA Synthetase, Domain 1"/>
    <property type="match status" value="1"/>
</dbReference>
<dbReference type="Gene3D" id="1.10.287.380">
    <property type="entry name" value="Valyl-tRNA synthetase, C-terminal domain"/>
    <property type="match status" value="1"/>
</dbReference>
<dbReference type="Gene3D" id="3.90.740.10">
    <property type="entry name" value="Valyl/Leucyl/Isoleucyl-tRNA synthetase, editing domain"/>
    <property type="match status" value="1"/>
</dbReference>
<dbReference type="HAMAP" id="MF_02004">
    <property type="entry name" value="Val_tRNA_synth_type1"/>
    <property type="match status" value="1"/>
</dbReference>
<dbReference type="InterPro" id="IPR001412">
    <property type="entry name" value="aa-tRNA-synth_I_CS"/>
</dbReference>
<dbReference type="InterPro" id="IPR002300">
    <property type="entry name" value="aa-tRNA-synth_Ia"/>
</dbReference>
<dbReference type="InterPro" id="IPR033705">
    <property type="entry name" value="Anticodon_Ia_Val"/>
</dbReference>
<dbReference type="InterPro" id="IPR013155">
    <property type="entry name" value="M/V/L/I-tRNA-synth_anticd-bd"/>
</dbReference>
<dbReference type="InterPro" id="IPR014729">
    <property type="entry name" value="Rossmann-like_a/b/a_fold"/>
</dbReference>
<dbReference type="InterPro" id="IPR010978">
    <property type="entry name" value="tRNA-bd_arm"/>
</dbReference>
<dbReference type="InterPro" id="IPR009080">
    <property type="entry name" value="tRNAsynth_Ia_anticodon-bd"/>
</dbReference>
<dbReference type="InterPro" id="IPR037118">
    <property type="entry name" value="Val-tRNA_synth_C_sf"/>
</dbReference>
<dbReference type="InterPro" id="IPR019499">
    <property type="entry name" value="Val-tRNA_synth_tRNA-bd"/>
</dbReference>
<dbReference type="InterPro" id="IPR009008">
    <property type="entry name" value="Val/Leu/Ile-tRNA-synth_edit"/>
</dbReference>
<dbReference type="InterPro" id="IPR002303">
    <property type="entry name" value="Valyl-tRNA_ligase"/>
</dbReference>
<dbReference type="NCBIfam" id="NF004349">
    <property type="entry name" value="PRK05729.1"/>
    <property type="match status" value="1"/>
</dbReference>
<dbReference type="NCBIfam" id="TIGR00422">
    <property type="entry name" value="valS"/>
    <property type="match status" value="1"/>
</dbReference>
<dbReference type="PANTHER" id="PTHR11946:SF93">
    <property type="entry name" value="VALINE--TRNA LIGASE, CHLOROPLASTIC_MITOCHONDRIAL 2"/>
    <property type="match status" value="1"/>
</dbReference>
<dbReference type="PANTHER" id="PTHR11946">
    <property type="entry name" value="VALYL-TRNA SYNTHETASES"/>
    <property type="match status" value="1"/>
</dbReference>
<dbReference type="Pfam" id="PF08264">
    <property type="entry name" value="Anticodon_1"/>
    <property type="match status" value="1"/>
</dbReference>
<dbReference type="Pfam" id="PF00133">
    <property type="entry name" value="tRNA-synt_1"/>
    <property type="match status" value="1"/>
</dbReference>
<dbReference type="Pfam" id="PF10458">
    <property type="entry name" value="Val_tRNA-synt_C"/>
    <property type="match status" value="1"/>
</dbReference>
<dbReference type="PRINTS" id="PR00986">
    <property type="entry name" value="TRNASYNTHVAL"/>
</dbReference>
<dbReference type="SUPFAM" id="SSF47323">
    <property type="entry name" value="Anticodon-binding domain of a subclass of class I aminoacyl-tRNA synthetases"/>
    <property type="match status" value="1"/>
</dbReference>
<dbReference type="SUPFAM" id="SSF52374">
    <property type="entry name" value="Nucleotidylyl transferase"/>
    <property type="match status" value="1"/>
</dbReference>
<dbReference type="SUPFAM" id="SSF46589">
    <property type="entry name" value="tRNA-binding arm"/>
    <property type="match status" value="1"/>
</dbReference>
<dbReference type="SUPFAM" id="SSF50677">
    <property type="entry name" value="ValRS/IleRS/LeuRS editing domain"/>
    <property type="match status" value="1"/>
</dbReference>
<dbReference type="PROSITE" id="PS00178">
    <property type="entry name" value="AA_TRNA_LIGASE_I"/>
    <property type="match status" value="1"/>
</dbReference>
<organism>
    <name type="scientific">Malacoplasma penetrans (strain HF-2)</name>
    <name type="common">Mycoplasma penetrans</name>
    <dbReference type="NCBI Taxonomy" id="272633"/>
    <lineage>
        <taxon>Bacteria</taxon>
        <taxon>Bacillati</taxon>
        <taxon>Mycoplasmatota</taxon>
        <taxon>Mycoplasmoidales</taxon>
        <taxon>Mycoplasmoidaceae</taxon>
        <taxon>Malacoplasma</taxon>
    </lineage>
</organism>
<name>SYV_MALP2</name>
<gene>
    <name evidence="1" type="primary">valS</name>
    <name type="ordered locus">MYPE420</name>
</gene>
<sequence length="869" mass="102214">MSNIKNNNDLSKKYDHKICEQQFSLWTTQKELNKKNLKANKNSYSILLPPPNVTGNLHLGHALNGTIQDCLIRFNNLKGLSAYWICGMDHAGIATQTKYEKYLRENKISNKDKSRDEKVADLFEWSQNVGNNIRNQWKNMGFFLDYENEHFTLEKKSNEMVNQVFVKMYNDGLIYRSKTLVNWDIKLQSAISNIEVIKKEVETNLYYIRYYLSNSKDYLLVATTRPETIFVDECLVVNPKDKRYKNYINKFAINPLTNKEIKIIADEYVDIQFGTGVMKCTPAHDFNDYELGKKYKLNIISCFNEDGTTNNYAVGFENLKIADARVKCVEYLEKNNLLEKVEKTISNVGFSERTNAVVEPMMSEQWFVKVSEYSKKVIELQKSSKKIQFFPIKFEKNLINWMTNLNDWCISRQLWWGHQIPVWYKKDSKEIYVGTKPPKNEELYVRDNDVLDTWFSSGLWPITTTDALKSKDALFPTNVLVTGFDIIFFWVFRMMFFSLYLKKEVPFKHCYITGLIRDEHNNKMSKSLGNGVDPNDVIEKYGADALRLFLLSSSSPGEDLCYVEEKVKSCWGFINKLWNSFRYVEMNSSDFNFDEDKTPKNLEDFDKWILNKFNKAYSEFLQQFNKYNFLVSIKKILDFTWDDFCNTYIELSKNRTSNQESKLWVLNYLIKKILILFHPMCPFVTSNLYDNFKFKTKDSILLERLDFKKISNLKESSIEDVLQIINKIRIFNFENKIPNNKVIDIHLEVLNPKLFKISDEVINILNTAKINIVKQDIKSLKPDYVENNYLIFILNKEDLLGSNNEANNIEKIKKEIEFVKSEISRCNGMLSNKSFIEKAPKEKIELEKSKKEKHEMKLKELEKLLSSHK</sequence>
<proteinExistence type="inferred from homology"/>
<feature type="chain" id="PRO_0000224513" description="Valine--tRNA ligase">
    <location>
        <begin position="1"/>
        <end position="869"/>
    </location>
</feature>
<feature type="coiled-coil region" evidence="1">
    <location>
        <begin position="797"/>
        <end position="869"/>
    </location>
</feature>
<feature type="short sequence motif" description="'HIGH' region">
    <location>
        <begin position="51"/>
        <end position="61"/>
    </location>
</feature>
<feature type="short sequence motif" description="'KMSKS' region">
    <location>
        <begin position="523"/>
        <end position="527"/>
    </location>
</feature>
<feature type="binding site" evidence="1">
    <location>
        <position position="526"/>
    </location>
    <ligand>
        <name>ATP</name>
        <dbReference type="ChEBI" id="CHEBI:30616"/>
    </ligand>
</feature>
<accession>Q8EX08</accession>
<protein>
    <recommendedName>
        <fullName evidence="1">Valine--tRNA ligase</fullName>
        <ecNumber evidence="1">6.1.1.9</ecNumber>
    </recommendedName>
    <alternativeName>
        <fullName evidence="1">Valyl-tRNA synthetase</fullName>
        <shortName evidence="1">ValRS</shortName>
    </alternativeName>
</protein>
<reference key="1">
    <citation type="journal article" date="2002" name="Nucleic Acids Res.">
        <title>The complete genomic sequence of Mycoplasma penetrans, an intracellular bacterial pathogen in humans.</title>
        <authorList>
            <person name="Sasaki Y."/>
            <person name="Ishikawa J."/>
            <person name="Yamashita A."/>
            <person name="Oshima K."/>
            <person name="Kenri T."/>
            <person name="Furuya K."/>
            <person name="Yoshino C."/>
            <person name="Horino A."/>
            <person name="Shiba T."/>
            <person name="Sasaki T."/>
            <person name="Hattori M."/>
        </authorList>
    </citation>
    <scope>NUCLEOTIDE SEQUENCE [LARGE SCALE GENOMIC DNA]</scope>
    <source>
        <strain>HF-2</strain>
    </source>
</reference>
<keyword id="KW-0030">Aminoacyl-tRNA synthetase</keyword>
<keyword id="KW-0067">ATP-binding</keyword>
<keyword id="KW-0175">Coiled coil</keyword>
<keyword id="KW-0963">Cytoplasm</keyword>
<keyword id="KW-0436">Ligase</keyword>
<keyword id="KW-0547">Nucleotide-binding</keyword>
<keyword id="KW-0648">Protein biosynthesis</keyword>
<keyword id="KW-1185">Reference proteome</keyword>
<comment type="function">
    <text evidence="1">Catalyzes the attachment of valine to tRNA(Val). As ValRS can inadvertently accommodate and process structurally similar amino acids such as threonine, to avoid such errors, it has a 'posttransfer' editing activity that hydrolyzes mischarged Thr-tRNA(Val) in a tRNA-dependent manner.</text>
</comment>
<comment type="catalytic activity">
    <reaction evidence="1">
        <text>tRNA(Val) + L-valine + ATP = L-valyl-tRNA(Val) + AMP + diphosphate</text>
        <dbReference type="Rhea" id="RHEA:10704"/>
        <dbReference type="Rhea" id="RHEA-COMP:9672"/>
        <dbReference type="Rhea" id="RHEA-COMP:9708"/>
        <dbReference type="ChEBI" id="CHEBI:30616"/>
        <dbReference type="ChEBI" id="CHEBI:33019"/>
        <dbReference type="ChEBI" id="CHEBI:57762"/>
        <dbReference type="ChEBI" id="CHEBI:78442"/>
        <dbReference type="ChEBI" id="CHEBI:78537"/>
        <dbReference type="ChEBI" id="CHEBI:456215"/>
        <dbReference type="EC" id="6.1.1.9"/>
    </reaction>
</comment>
<comment type="subunit">
    <text evidence="1">Monomer.</text>
</comment>
<comment type="subcellular location">
    <subcellularLocation>
        <location evidence="1">Cytoplasm</location>
    </subcellularLocation>
</comment>
<comment type="domain">
    <text evidence="1">ValRS has two distinct active sites: one for aminoacylation and one for editing. The misactivated threonine is translocated from the active site to the editing site.</text>
</comment>
<comment type="domain">
    <text evidence="1">The C-terminal coiled-coil domain is crucial for aminoacylation activity.</text>
</comment>
<comment type="similarity">
    <text evidence="1">Belongs to the class-I aminoacyl-tRNA synthetase family. ValS type 1 subfamily.</text>
</comment>
<comment type="sequence caution" evidence="2">
    <conflict type="erroneous initiation">
        <sequence resource="EMBL-CDS" id="BAC43832"/>
    </conflict>
</comment>
<evidence type="ECO:0000255" key="1">
    <source>
        <dbReference type="HAMAP-Rule" id="MF_02004"/>
    </source>
</evidence>
<evidence type="ECO:0000305" key="2"/>